<accession>Q2NER9</accession>
<keyword id="KW-0274">FAD</keyword>
<keyword id="KW-0285">Flavoprotein</keyword>
<keyword id="KW-0444">Lipid biosynthesis</keyword>
<keyword id="KW-0443">Lipid metabolism</keyword>
<keyword id="KW-0560">Oxidoreductase</keyword>
<keyword id="KW-0594">Phospholipid biosynthesis</keyword>
<keyword id="KW-1208">Phospholipid metabolism</keyword>
<keyword id="KW-1185">Reference proteome</keyword>
<protein>
    <recommendedName>
        <fullName evidence="1">Digeranylgeranylglycerophospholipid reductase 3</fullName>
        <shortName evidence="1">DGGGPL reductase 3</shortName>
        <ecNumber evidence="1">1.3.-.-</ecNumber>
    </recommendedName>
    <alternativeName>
        <fullName evidence="1">2,3-bis-O-geranylgeranylglyceryl phosphate reductase 3</fullName>
    </alternativeName>
    <alternativeName>
        <fullName evidence="1">Geranylgeranyl reductase 3</fullName>
        <shortName evidence="1">GGR 3</shortName>
    </alternativeName>
</protein>
<feature type="chain" id="PRO_0000351469" description="Digeranylgeranylglycerophospholipid reductase 3">
    <location>
        <begin position="1"/>
        <end position="397"/>
    </location>
</feature>
<feature type="binding site" evidence="1">
    <location>
        <position position="16"/>
    </location>
    <ligand>
        <name>FAD</name>
        <dbReference type="ChEBI" id="CHEBI:57692"/>
    </ligand>
</feature>
<feature type="binding site" evidence="1">
    <location>
        <position position="35"/>
    </location>
    <ligand>
        <name>FAD</name>
        <dbReference type="ChEBI" id="CHEBI:57692"/>
    </ligand>
</feature>
<feature type="binding site" evidence="1">
    <location>
        <position position="46"/>
    </location>
    <ligand>
        <name>FAD</name>
        <dbReference type="ChEBI" id="CHEBI:57692"/>
    </ligand>
</feature>
<feature type="binding site" evidence="1">
    <location>
        <position position="47"/>
    </location>
    <ligand>
        <name>FAD</name>
        <dbReference type="ChEBI" id="CHEBI:57692"/>
    </ligand>
</feature>
<feature type="binding site" evidence="1">
    <location>
        <position position="49"/>
    </location>
    <ligand>
        <name>FAD</name>
        <dbReference type="ChEBI" id="CHEBI:57692"/>
    </ligand>
</feature>
<feature type="binding site" evidence="1">
    <location>
        <position position="102"/>
    </location>
    <ligand>
        <name>FAD</name>
        <dbReference type="ChEBI" id="CHEBI:57692"/>
    </ligand>
</feature>
<feature type="binding site" evidence="1">
    <location>
        <position position="126"/>
    </location>
    <ligand>
        <name>FAD</name>
        <dbReference type="ChEBI" id="CHEBI:57692"/>
    </ligand>
</feature>
<feature type="binding site" evidence="1">
    <location>
        <position position="283"/>
    </location>
    <ligand>
        <name>FAD</name>
        <dbReference type="ChEBI" id="CHEBI:57692"/>
    </ligand>
</feature>
<feature type="binding site" evidence="1">
    <location>
        <position position="295"/>
    </location>
    <ligand>
        <name>FAD</name>
        <dbReference type="ChEBI" id="CHEBI:57692"/>
    </ligand>
</feature>
<feature type="binding site" evidence="1">
    <location>
        <position position="296"/>
    </location>
    <ligand>
        <name>FAD</name>
        <dbReference type="ChEBI" id="CHEBI:57692"/>
    </ligand>
</feature>
<feature type="binding site" evidence="1">
    <location>
        <position position="338"/>
    </location>
    <ligand>
        <name>a 2,3-bis-O-(geranylgeranyl)-sn-glycerol 1-phospholipid</name>
        <dbReference type="ChEBI" id="CHEBI:138140"/>
    </ligand>
</feature>
<gene>
    <name type="ordered locus">Msp_1307</name>
</gene>
<reference key="1">
    <citation type="journal article" date="2006" name="J. Bacteriol.">
        <title>The genome sequence of Methanosphaera stadtmanae reveals why this human intestinal archaeon is restricted to methanol and H2 for methane formation and ATP synthesis.</title>
        <authorList>
            <person name="Fricke W.F."/>
            <person name="Seedorf H."/>
            <person name="Henne A."/>
            <person name="Kruer M."/>
            <person name="Liesegang H."/>
            <person name="Hedderich R."/>
            <person name="Gottschalk G."/>
            <person name="Thauer R.K."/>
        </authorList>
    </citation>
    <scope>NUCLEOTIDE SEQUENCE [LARGE SCALE GENOMIC DNA]</scope>
    <source>
        <strain>ATCC 43021 / DSM 3091 / JCM 11832 / MCB-3</strain>
    </source>
</reference>
<name>GGR3_METST</name>
<comment type="function">
    <text evidence="1">Is involved in the reduction of 2,3-digeranylgeranylglycerophospholipids (unsaturated archaeols) into 2,3-diphytanylglycerophospholipids (saturated archaeols) in the biosynthesis of archaeal membrane lipids. Catalyzes the formation of archaetidic acid (2,3-di-O-phytanyl-sn-glyceryl phosphate) from 2,3-di-O-geranylgeranylglyceryl phosphate (DGGGP) via the hydrogenation of each double bond of the isoprenoid chains. Is also probably able to reduce double bonds of geranyl groups in CDP-2,3-bis-O-(geranylgeranyl)-sn-glycerol and archaetidylserine, thus acting at various stages in the biosynthesis of archaeal membrane lipids.</text>
</comment>
<comment type="catalytic activity">
    <reaction evidence="1">
        <text>a 2,3-bis-O-phytanyl-sn-glycerol 1-phospholipid + 8 A = a 2,3-bis-O-(geranylgeranyl)-sn-glycerol 1-phospholipid + 8 AH2</text>
        <dbReference type="Rhea" id="RHEA:64376"/>
        <dbReference type="ChEBI" id="CHEBI:13193"/>
        <dbReference type="ChEBI" id="CHEBI:17499"/>
        <dbReference type="ChEBI" id="CHEBI:138139"/>
        <dbReference type="ChEBI" id="CHEBI:138140"/>
    </reaction>
    <physiologicalReaction direction="right-to-left" evidence="1">
        <dbReference type="Rhea" id="RHEA:64378"/>
    </physiologicalReaction>
</comment>
<comment type="catalytic activity">
    <reaction evidence="1">
        <text>2,3-bis-O-(phytanyl)-sn-glycerol 1-phosphate + 8 A = 2,3-bis-O-(geranylgeranyl)-sn-glycerol 1-phosphate + 8 AH2</text>
        <dbReference type="Rhea" id="RHEA:64368"/>
        <dbReference type="ChEBI" id="CHEBI:13193"/>
        <dbReference type="ChEBI" id="CHEBI:17499"/>
        <dbReference type="ChEBI" id="CHEBI:58837"/>
        <dbReference type="ChEBI" id="CHEBI:73125"/>
    </reaction>
    <physiologicalReaction direction="right-to-left" evidence="1">
        <dbReference type="Rhea" id="RHEA:64370"/>
    </physiologicalReaction>
</comment>
<comment type="catalytic activity">
    <reaction evidence="1">
        <text>CDP-2,3-bis-O-(geranylgeranyl)-sn-glycerol + 8 AH2 = CDP-2,3-bis-O-(phytanyl)-sn-glycerol + 8 A</text>
        <dbReference type="Rhea" id="RHEA:84207"/>
        <dbReference type="ChEBI" id="CHEBI:13193"/>
        <dbReference type="ChEBI" id="CHEBI:17499"/>
        <dbReference type="ChEBI" id="CHEBI:58838"/>
        <dbReference type="ChEBI" id="CHEBI:74004"/>
    </reaction>
    <physiologicalReaction direction="left-to-right" evidence="1">
        <dbReference type="Rhea" id="RHEA:84208"/>
    </physiologicalReaction>
</comment>
<comment type="catalytic activity">
    <reaction evidence="1">
        <text>archaetidylserine + 8 AH2 = 2,3-bis-O-phytanyl-sn-glycero-3-phospho-L-serine + 8 A</text>
        <dbReference type="Rhea" id="RHEA:84215"/>
        <dbReference type="ChEBI" id="CHEBI:13193"/>
        <dbReference type="ChEBI" id="CHEBI:17499"/>
        <dbReference type="ChEBI" id="CHEBI:71517"/>
        <dbReference type="ChEBI" id="CHEBI:74853"/>
    </reaction>
    <physiologicalReaction direction="left-to-right" evidence="1">
        <dbReference type="Rhea" id="RHEA:84216"/>
    </physiologicalReaction>
</comment>
<comment type="cofactor">
    <cofactor evidence="1">
        <name>FAD</name>
        <dbReference type="ChEBI" id="CHEBI:57692"/>
    </cofactor>
    <text evidence="1">Binds 1 FAD per subunit.</text>
</comment>
<comment type="pathway">
    <text evidence="1">Membrane lipid metabolism; glycerophospholipid metabolism.</text>
</comment>
<comment type="miscellaneous">
    <text evidence="1">Reduction reaction proceeds via syn addition of hydrogen for double bonds.</text>
</comment>
<comment type="similarity">
    <text evidence="1">Belongs to the geranylgeranyl reductase family. DGGGPL reductase subfamily.</text>
</comment>
<evidence type="ECO:0000255" key="1">
    <source>
        <dbReference type="HAMAP-Rule" id="MF_01287"/>
    </source>
</evidence>
<proteinExistence type="inferred from homology"/>
<sequence length="397" mass="43442">MNIKEVDVLIIGAGPAGSLAAREASKNGAKTLIIDKKSEIGTPKRCAEGIMSGVLERVHITPDERWIARKIDGARIVSPNNTSAWFTPETLETPATGIILERKVFDKHMTMDAIREGAEVMIKTEALSMKREGDGYLVDIKSFNKEYNQIKAHIVIGADGPEGHVARWAELNTKVPLAEMESGLQYEMTNLKMKNNSVIQFFFGSVAPGGYAWIFPKGYDTANVGIDISGIKAEKSAVKYLNDFIANCDETKDGQIVEINAGGNPLCGIFDKIITDNVMLVGDAAGCVSPITGGGIDTALESGMIAGRVAAKAIKNRDYSEEKLQEYADYIDSHLGKKFKKYIAIRDVLYNSSDEDLDEYITALANANITKLSTKSLIKVVMKISPRKLFKLRKILL</sequence>
<dbReference type="EC" id="1.3.-.-" evidence="1"/>
<dbReference type="EMBL" id="CP000102">
    <property type="protein sequence ID" value="ABC57684.1"/>
    <property type="molecule type" value="Genomic_DNA"/>
</dbReference>
<dbReference type="SMR" id="Q2NER9"/>
<dbReference type="STRING" id="339860.Msp_1307"/>
<dbReference type="KEGG" id="mst:Msp_1307"/>
<dbReference type="eggNOG" id="arCOG00570">
    <property type="taxonomic scope" value="Archaea"/>
</dbReference>
<dbReference type="HOGENOM" id="CLU_024648_0_0_2"/>
<dbReference type="OrthoDB" id="6062at2157"/>
<dbReference type="UniPathway" id="UPA00940"/>
<dbReference type="Proteomes" id="UP000001931">
    <property type="component" value="Chromosome"/>
</dbReference>
<dbReference type="GO" id="GO:0016020">
    <property type="term" value="C:membrane"/>
    <property type="evidence" value="ECO:0007669"/>
    <property type="project" value="GOC"/>
</dbReference>
<dbReference type="GO" id="GO:0071949">
    <property type="term" value="F:FAD binding"/>
    <property type="evidence" value="ECO:0007669"/>
    <property type="project" value="InterPro"/>
</dbReference>
<dbReference type="GO" id="GO:0045550">
    <property type="term" value="F:geranylgeranyl reductase activity"/>
    <property type="evidence" value="ECO:0007669"/>
    <property type="project" value="InterPro"/>
</dbReference>
<dbReference type="GO" id="GO:0016628">
    <property type="term" value="F:oxidoreductase activity, acting on the CH-CH group of donors, NAD or NADP as acceptor"/>
    <property type="evidence" value="ECO:0007669"/>
    <property type="project" value="InterPro"/>
</dbReference>
<dbReference type="GO" id="GO:0046474">
    <property type="term" value="P:glycerophospholipid biosynthetic process"/>
    <property type="evidence" value="ECO:0007669"/>
    <property type="project" value="UniProtKB-UniRule"/>
</dbReference>
<dbReference type="GO" id="GO:0046467">
    <property type="term" value="P:membrane lipid biosynthetic process"/>
    <property type="evidence" value="ECO:0007669"/>
    <property type="project" value="InterPro"/>
</dbReference>
<dbReference type="Gene3D" id="3.30.9.10">
    <property type="entry name" value="D-Amino Acid Oxidase, subunit A, domain 2"/>
    <property type="match status" value="1"/>
</dbReference>
<dbReference type="Gene3D" id="3.50.50.60">
    <property type="entry name" value="FAD/NAD(P)-binding domain"/>
    <property type="match status" value="1"/>
</dbReference>
<dbReference type="HAMAP" id="MF_01287">
    <property type="entry name" value="DGGGPL_reductase"/>
    <property type="match status" value="1"/>
</dbReference>
<dbReference type="InterPro" id="IPR023590">
    <property type="entry name" value="DGGGPL_reductase"/>
</dbReference>
<dbReference type="InterPro" id="IPR002938">
    <property type="entry name" value="FAD-bd"/>
</dbReference>
<dbReference type="InterPro" id="IPR036188">
    <property type="entry name" value="FAD/NAD-bd_sf"/>
</dbReference>
<dbReference type="InterPro" id="IPR011777">
    <property type="entry name" value="Geranylgeranyl_Rdtase_fam"/>
</dbReference>
<dbReference type="InterPro" id="IPR050407">
    <property type="entry name" value="Geranylgeranyl_reductase"/>
</dbReference>
<dbReference type="InterPro" id="IPR054715">
    <property type="entry name" value="GGR_cat"/>
</dbReference>
<dbReference type="NCBIfam" id="TIGR02032">
    <property type="entry name" value="GG-red-SF"/>
    <property type="match status" value="1"/>
</dbReference>
<dbReference type="PANTHER" id="PTHR42685:SF18">
    <property type="entry name" value="DIGERANYLGERANYLGLYCEROPHOSPHOLIPID REDUCTASE"/>
    <property type="match status" value="1"/>
</dbReference>
<dbReference type="PANTHER" id="PTHR42685">
    <property type="entry name" value="GERANYLGERANYL DIPHOSPHATE REDUCTASE"/>
    <property type="match status" value="1"/>
</dbReference>
<dbReference type="Pfam" id="PF01494">
    <property type="entry name" value="FAD_binding_3"/>
    <property type="match status" value="1"/>
</dbReference>
<dbReference type="Pfam" id="PF22578">
    <property type="entry name" value="GGR_cat"/>
    <property type="match status" value="1"/>
</dbReference>
<dbReference type="PRINTS" id="PR00420">
    <property type="entry name" value="RNGMNOXGNASE"/>
</dbReference>
<dbReference type="SUPFAM" id="SSF51905">
    <property type="entry name" value="FAD/NAD(P)-binding domain"/>
    <property type="match status" value="1"/>
</dbReference>
<organism>
    <name type="scientific">Methanosphaera stadtmanae (strain ATCC 43021 / DSM 3091 / JCM 11832 / MCB-3)</name>
    <dbReference type="NCBI Taxonomy" id="339860"/>
    <lineage>
        <taxon>Archaea</taxon>
        <taxon>Methanobacteriati</taxon>
        <taxon>Methanobacteriota</taxon>
        <taxon>Methanomada group</taxon>
        <taxon>Methanobacteria</taxon>
        <taxon>Methanobacteriales</taxon>
        <taxon>Methanobacteriaceae</taxon>
        <taxon>Methanosphaera</taxon>
    </lineage>
</organism>